<keyword id="KW-0067">ATP-binding</keyword>
<keyword id="KW-0418">Kinase</keyword>
<keyword id="KW-0441">Lipid A biosynthesis</keyword>
<keyword id="KW-0444">Lipid biosynthesis</keyword>
<keyword id="KW-0443">Lipid metabolism</keyword>
<keyword id="KW-0547">Nucleotide-binding</keyword>
<keyword id="KW-0808">Transferase</keyword>
<sequence>MIERIWSGQSRLYLLLLPLSWLYGAVTWLIRASYRLGLRSAWRSPVPVIIVGNLTAGGNGKTPVVIWLVEQLQQRGYRVGVVSRGYGGKSAVYPLLLSDNTTTAQAGDEPVLIFQRTGAPVAVSPKRADAIKALLQSHAVDFIITDDGLQHYALQRDFELVVIDGVRRFGNGWWLPAGPMREREGRLRSVDAAITNGGLAAEGEIPMQLVAREAVNLVTGQRQPAEQLQHVVAMAGIGHPPRFFATLNLLGIKPENEHAFADHQDYSLAQLSRLTSGPQILLMTEKDAVKCRAFALPNWWYLPVDAQLPSDRADKLLLNIQALSPDTK</sequence>
<evidence type="ECO:0000255" key="1">
    <source>
        <dbReference type="HAMAP-Rule" id="MF_00409"/>
    </source>
</evidence>
<dbReference type="EC" id="2.7.1.130" evidence="1"/>
<dbReference type="EMBL" id="CP000308">
    <property type="protein sequence ID" value="ABG12655.1"/>
    <property type="molecule type" value="Genomic_DNA"/>
</dbReference>
<dbReference type="RefSeq" id="WP_002211319.1">
    <property type="nucleotide sequence ID" value="NZ_CP009906.1"/>
</dbReference>
<dbReference type="SMR" id="Q1CA67"/>
<dbReference type="GeneID" id="57977192"/>
<dbReference type="KEGG" id="ypa:YPA_0687"/>
<dbReference type="UniPathway" id="UPA00359">
    <property type="reaction ID" value="UER00482"/>
</dbReference>
<dbReference type="Proteomes" id="UP000001971">
    <property type="component" value="Chromosome"/>
</dbReference>
<dbReference type="GO" id="GO:0005886">
    <property type="term" value="C:plasma membrane"/>
    <property type="evidence" value="ECO:0007669"/>
    <property type="project" value="TreeGrafter"/>
</dbReference>
<dbReference type="GO" id="GO:0005524">
    <property type="term" value="F:ATP binding"/>
    <property type="evidence" value="ECO:0007669"/>
    <property type="project" value="UniProtKB-UniRule"/>
</dbReference>
<dbReference type="GO" id="GO:0009029">
    <property type="term" value="F:tetraacyldisaccharide 4'-kinase activity"/>
    <property type="evidence" value="ECO:0007669"/>
    <property type="project" value="UniProtKB-UniRule"/>
</dbReference>
<dbReference type="GO" id="GO:0009245">
    <property type="term" value="P:lipid A biosynthetic process"/>
    <property type="evidence" value="ECO:0007669"/>
    <property type="project" value="UniProtKB-UniRule"/>
</dbReference>
<dbReference type="GO" id="GO:0009244">
    <property type="term" value="P:lipopolysaccharide core region biosynthetic process"/>
    <property type="evidence" value="ECO:0007669"/>
    <property type="project" value="TreeGrafter"/>
</dbReference>
<dbReference type="Gene3D" id="3.40.50.300">
    <property type="entry name" value="P-loop containing nucleotide triphosphate hydrolases"/>
    <property type="match status" value="1"/>
</dbReference>
<dbReference type="HAMAP" id="MF_00409">
    <property type="entry name" value="LpxK"/>
    <property type="match status" value="1"/>
</dbReference>
<dbReference type="InterPro" id="IPR003758">
    <property type="entry name" value="LpxK"/>
</dbReference>
<dbReference type="InterPro" id="IPR027417">
    <property type="entry name" value="P-loop_NTPase"/>
</dbReference>
<dbReference type="NCBIfam" id="TIGR00682">
    <property type="entry name" value="lpxK"/>
    <property type="match status" value="1"/>
</dbReference>
<dbReference type="PANTHER" id="PTHR42724">
    <property type="entry name" value="TETRAACYLDISACCHARIDE 4'-KINASE"/>
    <property type="match status" value="1"/>
</dbReference>
<dbReference type="PANTHER" id="PTHR42724:SF1">
    <property type="entry name" value="TETRAACYLDISACCHARIDE 4'-KINASE, MITOCHONDRIAL-RELATED"/>
    <property type="match status" value="1"/>
</dbReference>
<dbReference type="Pfam" id="PF02606">
    <property type="entry name" value="LpxK"/>
    <property type="match status" value="1"/>
</dbReference>
<dbReference type="SUPFAM" id="SSF52540">
    <property type="entry name" value="P-loop containing nucleoside triphosphate hydrolases"/>
    <property type="match status" value="1"/>
</dbReference>
<accession>Q1CA67</accession>
<organism>
    <name type="scientific">Yersinia pestis bv. Antiqua (strain Antiqua)</name>
    <dbReference type="NCBI Taxonomy" id="360102"/>
    <lineage>
        <taxon>Bacteria</taxon>
        <taxon>Pseudomonadati</taxon>
        <taxon>Pseudomonadota</taxon>
        <taxon>Gammaproteobacteria</taxon>
        <taxon>Enterobacterales</taxon>
        <taxon>Yersiniaceae</taxon>
        <taxon>Yersinia</taxon>
    </lineage>
</organism>
<feature type="chain" id="PRO_0000291255" description="Tetraacyldisaccharide 4'-kinase">
    <location>
        <begin position="1"/>
        <end position="328"/>
    </location>
</feature>
<feature type="binding site" evidence="1">
    <location>
        <begin position="55"/>
        <end position="62"/>
    </location>
    <ligand>
        <name>ATP</name>
        <dbReference type="ChEBI" id="CHEBI:30616"/>
    </ligand>
</feature>
<reference key="1">
    <citation type="journal article" date="2006" name="J. Bacteriol.">
        <title>Complete genome sequence of Yersinia pestis strains Antiqua and Nepal516: evidence of gene reduction in an emerging pathogen.</title>
        <authorList>
            <person name="Chain P.S.G."/>
            <person name="Hu P."/>
            <person name="Malfatti S.A."/>
            <person name="Radnedge L."/>
            <person name="Larimer F."/>
            <person name="Vergez L.M."/>
            <person name="Worsham P."/>
            <person name="Chu M.C."/>
            <person name="Andersen G.L."/>
        </authorList>
    </citation>
    <scope>NUCLEOTIDE SEQUENCE [LARGE SCALE GENOMIC DNA]</scope>
    <source>
        <strain>Antiqua</strain>
    </source>
</reference>
<proteinExistence type="inferred from homology"/>
<protein>
    <recommendedName>
        <fullName evidence="1">Tetraacyldisaccharide 4'-kinase</fullName>
        <ecNumber evidence="1">2.7.1.130</ecNumber>
    </recommendedName>
    <alternativeName>
        <fullName evidence="1">Lipid A 4'-kinase</fullName>
    </alternativeName>
</protein>
<gene>
    <name evidence="1" type="primary">lpxK</name>
    <name type="ordered locus">YPA_0687</name>
</gene>
<comment type="function">
    <text evidence="1">Transfers the gamma-phosphate of ATP to the 4'-position of a tetraacyldisaccharide 1-phosphate intermediate (termed DS-1-P) to form tetraacyldisaccharide 1,4'-bis-phosphate (lipid IVA).</text>
</comment>
<comment type="catalytic activity">
    <reaction evidence="1">
        <text>a lipid A disaccharide + ATP = a lipid IVA + ADP + H(+)</text>
        <dbReference type="Rhea" id="RHEA:67840"/>
        <dbReference type="ChEBI" id="CHEBI:15378"/>
        <dbReference type="ChEBI" id="CHEBI:30616"/>
        <dbReference type="ChEBI" id="CHEBI:176343"/>
        <dbReference type="ChEBI" id="CHEBI:176425"/>
        <dbReference type="ChEBI" id="CHEBI:456216"/>
        <dbReference type="EC" id="2.7.1.130"/>
    </reaction>
</comment>
<comment type="pathway">
    <text evidence="1">Glycolipid biosynthesis; lipid IV(A) biosynthesis; lipid IV(A) from (3R)-3-hydroxytetradecanoyl-[acyl-carrier-protein] and UDP-N-acetyl-alpha-D-glucosamine: step 6/6.</text>
</comment>
<comment type="similarity">
    <text evidence="1">Belongs to the LpxK family.</text>
</comment>
<name>LPXK_YERPA</name>